<reference key="1">
    <citation type="submission" date="2006-08" db="EMBL/GenBank/DDBJ databases">
        <title>Complete sequence of chromosome 1 of Burkholderia cepacia AMMD.</title>
        <authorList>
            <person name="Copeland A."/>
            <person name="Lucas S."/>
            <person name="Lapidus A."/>
            <person name="Barry K."/>
            <person name="Detter J.C."/>
            <person name="Glavina del Rio T."/>
            <person name="Hammon N."/>
            <person name="Israni S."/>
            <person name="Pitluck S."/>
            <person name="Bruce D."/>
            <person name="Chain P."/>
            <person name="Malfatti S."/>
            <person name="Shin M."/>
            <person name="Vergez L."/>
            <person name="Schmutz J."/>
            <person name="Larimer F."/>
            <person name="Land M."/>
            <person name="Hauser L."/>
            <person name="Kyrpides N."/>
            <person name="Kim E."/>
            <person name="Parke J."/>
            <person name="Coenye T."/>
            <person name="Konstantinidis K."/>
            <person name="Ramette A."/>
            <person name="Tiedje J."/>
            <person name="Richardson P."/>
        </authorList>
    </citation>
    <scope>NUCLEOTIDE SEQUENCE [LARGE SCALE GENOMIC DNA]</scope>
    <source>
        <strain>ATCC BAA-244 / DSM 16087 / CCUG 44356 / LMG 19182 / AMMD</strain>
    </source>
</reference>
<gene>
    <name evidence="1" type="primary">rplQ</name>
    <name type="ordered locus">Bamb_0294</name>
</gene>
<feature type="chain" id="PRO_1000055783" description="Large ribosomal subunit protein bL17">
    <location>
        <begin position="1"/>
        <end position="131"/>
    </location>
</feature>
<proteinExistence type="inferred from homology"/>
<sequence>MRHRHGLRKLNRTSSHRLAMLRNMSNSLIEHEVIKTTLPKAKELRKVVEPLITLGKKPSLANRRLAFNRLRDRDSVAKLFDVLGPRFANRPGGYLRVLKFGFRVGDNAPMALVELLDRPEVDETENVQEAE</sequence>
<protein>
    <recommendedName>
        <fullName evidence="1">Large ribosomal subunit protein bL17</fullName>
    </recommendedName>
    <alternativeName>
        <fullName evidence="2">50S ribosomal protein L17</fullName>
    </alternativeName>
</protein>
<evidence type="ECO:0000255" key="1">
    <source>
        <dbReference type="HAMAP-Rule" id="MF_01368"/>
    </source>
</evidence>
<evidence type="ECO:0000305" key="2"/>
<name>RL17_BURCM</name>
<keyword id="KW-0687">Ribonucleoprotein</keyword>
<keyword id="KW-0689">Ribosomal protein</keyword>
<dbReference type="EMBL" id="CP000440">
    <property type="protein sequence ID" value="ABI85854.1"/>
    <property type="molecule type" value="Genomic_DNA"/>
</dbReference>
<dbReference type="RefSeq" id="WP_006477175.1">
    <property type="nucleotide sequence ID" value="NZ_CP009798.1"/>
</dbReference>
<dbReference type="SMR" id="Q0BJ19"/>
<dbReference type="GeneID" id="98107133"/>
<dbReference type="KEGG" id="bam:Bamb_0294"/>
<dbReference type="PATRIC" id="fig|339670.21.peg.1326"/>
<dbReference type="eggNOG" id="COG0203">
    <property type="taxonomic scope" value="Bacteria"/>
</dbReference>
<dbReference type="Proteomes" id="UP000000662">
    <property type="component" value="Chromosome 1"/>
</dbReference>
<dbReference type="GO" id="GO:0022625">
    <property type="term" value="C:cytosolic large ribosomal subunit"/>
    <property type="evidence" value="ECO:0007669"/>
    <property type="project" value="TreeGrafter"/>
</dbReference>
<dbReference type="GO" id="GO:0003735">
    <property type="term" value="F:structural constituent of ribosome"/>
    <property type="evidence" value="ECO:0007669"/>
    <property type="project" value="InterPro"/>
</dbReference>
<dbReference type="GO" id="GO:0006412">
    <property type="term" value="P:translation"/>
    <property type="evidence" value="ECO:0007669"/>
    <property type="project" value="UniProtKB-UniRule"/>
</dbReference>
<dbReference type="FunFam" id="3.90.1030.10:FF:000001">
    <property type="entry name" value="50S ribosomal protein L17"/>
    <property type="match status" value="1"/>
</dbReference>
<dbReference type="Gene3D" id="3.90.1030.10">
    <property type="entry name" value="Ribosomal protein L17"/>
    <property type="match status" value="1"/>
</dbReference>
<dbReference type="HAMAP" id="MF_01368">
    <property type="entry name" value="Ribosomal_bL17"/>
    <property type="match status" value="1"/>
</dbReference>
<dbReference type="InterPro" id="IPR000456">
    <property type="entry name" value="Ribosomal_bL17"/>
</dbReference>
<dbReference type="InterPro" id="IPR047859">
    <property type="entry name" value="Ribosomal_bL17_CS"/>
</dbReference>
<dbReference type="InterPro" id="IPR036373">
    <property type="entry name" value="Ribosomal_bL17_sf"/>
</dbReference>
<dbReference type="NCBIfam" id="TIGR00059">
    <property type="entry name" value="L17"/>
    <property type="match status" value="1"/>
</dbReference>
<dbReference type="PANTHER" id="PTHR14413:SF16">
    <property type="entry name" value="LARGE RIBOSOMAL SUBUNIT PROTEIN BL17M"/>
    <property type="match status" value="1"/>
</dbReference>
<dbReference type="PANTHER" id="PTHR14413">
    <property type="entry name" value="RIBOSOMAL PROTEIN L17"/>
    <property type="match status" value="1"/>
</dbReference>
<dbReference type="Pfam" id="PF01196">
    <property type="entry name" value="Ribosomal_L17"/>
    <property type="match status" value="1"/>
</dbReference>
<dbReference type="SUPFAM" id="SSF64263">
    <property type="entry name" value="Prokaryotic ribosomal protein L17"/>
    <property type="match status" value="1"/>
</dbReference>
<dbReference type="PROSITE" id="PS01167">
    <property type="entry name" value="RIBOSOMAL_L17"/>
    <property type="match status" value="1"/>
</dbReference>
<comment type="subunit">
    <text evidence="1">Part of the 50S ribosomal subunit. Contacts protein L32.</text>
</comment>
<comment type="similarity">
    <text evidence="1">Belongs to the bacterial ribosomal protein bL17 family.</text>
</comment>
<organism>
    <name type="scientific">Burkholderia ambifaria (strain ATCC BAA-244 / DSM 16087 / CCUG 44356 / LMG 19182 / AMMD)</name>
    <name type="common">Burkholderia cepacia (strain AMMD)</name>
    <dbReference type="NCBI Taxonomy" id="339670"/>
    <lineage>
        <taxon>Bacteria</taxon>
        <taxon>Pseudomonadati</taxon>
        <taxon>Pseudomonadota</taxon>
        <taxon>Betaproteobacteria</taxon>
        <taxon>Burkholderiales</taxon>
        <taxon>Burkholderiaceae</taxon>
        <taxon>Burkholderia</taxon>
        <taxon>Burkholderia cepacia complex</taxon>
    </lineage>
</organism>
<accession>Q0BJ19</accession>